<reference key="1">
    <citation type="journal article" date="2000" name="Proc. Natl. Acad. Sci. U.S.A.">
        <title>Archaeal adaptation to higher temperatures revealed by genomic sequence of Thermoplasma volcanium.</title>
        <authorList>
            <person name="Kawashima T."/>
            <person name="Amano N."/>
            <person name="Koike H."/>
            <person name="Makino S."/>
            <person name="Higuchi S."/>
            <person name="Kawashima-Ohya Y."/>
            <person name="Watanabe K."/>
            <person name="Yamazaki M."/>
            <person name="Kanehori K."/>
            <person name="Kawamoto T."/>
            <person name="Nunoshiba T."/>
            <person name="Yamamoto Y."/>
            <person name="Aramaki H."/>
            <person name="Makino K."/>
            <person name="Suzuki M."/>
        </authorList>
    </citation>
    <scope>NUCLEOTIDE SEQUENCE [LARGE SCALE GENOMIC DNA]</scope>
    <source>
        <strain>ATCC 51530 / DSM 4299 / JCM 9571 / NBRC 15438 / GSS1</strain>
    </source>
</reference>
<comment type="similarity">
    <text evidence="1">Belongs to the UPF0215 family.</text>
</comment>
<comment type="sequence caution" evidence="2">
    <conflict type="erroneous initiation">
        <sequence resource="EMBL-CDS" id="BAB59179"/>
    </conflict>
</comment>
<sequence length="194" mass="21243">MIPAIIGTRPNNSIALHKSGIRLLGVDDSPFRRGQQKSFIVGVIMRLDGYIEKVMKAQITIDGNDVTERISNMALKFKDIVRVIVLSGISFGGFNICDIELLFKLTGIPVISLFEKGGSASEMINAINKHLGDQEKIGILKRLKPIALNNNGYTIMANLAGIESESASRIIRMNTVRGKMPEAVRVPDLIAKIL</sequence>
<accession>Q97CR4</accession>
<gene>
    <name type="ordered locus">TV0037</name>
    <name type="ORF">TVG0042157</name>
</gene>
<protein>
    <recommendedName>
        <fullName evidence="1">UPF0215 protein TV0037</fullName>
    </recommendedName>
</protein>
<organism>
    <name type="scientific">Thermoplasma volcanium (strain ATCC 51530 / DSM 4299 / JCM 9571 / NBRC 15438 / GSS1)</name>
    <dbReference type="NCBI Taxonomy" id="273116"/>
    <lineage>
        <taxon>Archaea</taxon>
        <taxon>Methanobacteriati</taxon>
        <taxon>Thermoplasmatota</taxon>
        <taxon>Thermoplasmata</taxon>
        <taxon>Thermoplasmatales</taxon>
        <taxon>Thermoplasmataceae</taxon>
        <taxon>Thermoplasma</taxon>
    </lineage>
</organism>
<name>Y037_THEVO</name>
<evidence type="ECO:0000255" key="1">
    <source>
        <dbReference type="HAMAP-Rule" id="MF_00582"/>
    </source>
</evidence>
<evidence type="ECO:0000305" key="2"/>
<proteinExistence type="inferred from homology"/>
<dbReference type="EMBL" id="BA000011">
    <property type="protein sequence ID" value="BAB59179.1"/>
    <property type="status" value="ALT_INIT"/>
    <property type="molecule type" value="Genomic_DNA"/>
</dbReference>
<dbReference type="SMR" id="Q97CR4"/>
<dbReference type="STRING" id="273116.gene:9380802"/>
<dbReference type="PaxDb" id="273116-14324251"/>
<dbReference type="KEGG" id="tvo:TVG0042157"/>
<dbReference type="eggNOG" id="arCOG00928">
    <property type="taxonomic scope" value="Archaea"/>
</dbReference>
<dbReference type="HOGENOM" id="CLU_095956_1_0_2"/>
<dbReference type="PhylomeDB" id="Q97CR4"/>
<dbReference type="Proteomes" id="UP000001017">
    <property type="component" value="Chromosome"/>
</dbReference>
<dbReference type="Gene3D" id="3.30.2170.10">
    <property type="entry name" value="archaeoglobus fulgidus dsm 4304 superfamily"/>
    <property type="match status" value="1"/>
</dbReference>
<dbReference type="HAMAP" id="MF_00582">
    <property type="entry name" value="UPF0215"/>
    <property type="match status" value="1"/>
</dbReference>
<dbReference type="InterPro" id="IPR002802">
    <property type="entry name" value="Endo_dU"/>
</dbReference>
<dbReference type="PANTHER" id="PTHR39518">
    <property type="entry name" value="UPF0215 PROTEIN MJ1150"/>
    <property type="match status" value="1"/>
</dbReference>
<dbReference type="PANTHER" id="PTHR39518:SF2">
    <property type="entry name" value="UPF0215 PROTEIN MJ1150"/>
    <property type="match status" value="1"/>
</dbReference>
<dbReference type="Pfam" id="PF01949">
    <property type="entry name" value="DUF99"/>
    <property type="match status" value="1"/>
</dbReference>
<dbReference type="PIRSF" id="PIRSF006380">
    <property type="entry name" value="UCP006380"/>
    <property type="match status" value="1"/>
</dbReference>
<feature type="chain" id="PRO_0000149247" description="UPF0215 protein TV0037">
    <location>
        <begin position="1"/>
        <end position="194"/>
    </location>
</feature>